<proteinExistence type="inferred from homology"/>
<accession>A6WHV3</accession>
<feature type="chain" id="PRO_0000323653" description="DNA-directed RNA polymerase subunit alpha">
    <location>
        <begin position="1"/>
        <end position="329"/>
    </location>
</feature>
<feature type="region of interest" description="Alpha N-terminal domain (alpha-NTD)" evidence="1">
    <location>
        <begin position="1"/>
        <end position="234"/>
    </location>
</feature>
<feature type="region of interest" description="Alpha C-terminal domain (alpha-CTD)" evidence="1">
    <location>
        <begin position="248"/>
        <end position="329"/>
    </location>
</feature>
<gene>
    <name evidence="1" type="primary">rpoA</name>
    <name type="ordered locus">Shew185_0221</name>
</gene>
<dbReference type="EC" id="2.7.7.6" evidence="1"/>
<dbReference type="EMBL" id="CP000753">
    <property type="protein sequence ID" value="ABS06392.1"/>
    <property type="molecule type" value="Genomic_DNA"/>
</dbReference>
<dbReference type="RefSeq" id="WP_006083574.1">
    <property type="nucleotide sequence ID" value="NC_009665.1"/>
</dbReference>
<dbReference type="SMR" id="A6WHV3"/>
<dbReference type="KEGG" id="sbm:Shew185_0221"/>
<dbReference type="HOGENOM" id="CLU_053084_0_0_6"/>
<dbReference type="GO" id="GO:0005737">
    <property type="term" value="C:cytoplasm"/>
    <property type="evidence" value="ECO:0007669"/>
    <property type="project" value="UniProtKB-ARBA"/>
</dbReference>
<dbReference type="GO" id="GO:0000428">
    <property type="term" value="C:DNA-directed RNA polymerase complex"/>
    <property type="evidence" value="ECO:0007669"/>
    <property type="project" value="UniProtKB-KW"/>
</dbReference>
<dbReference type="GO" id="GO:0003677">
    <property type="term" value="F:DNA binding"/>
    <property type="evidence" value="ECO:0007669"/>
    <property type="project" value="UniProtKB-UniRule"/>
</dbReference>
<dbReference type="GO" id="GO:0003899">
    <property type="term" value="F:DNA-directed RNA polymerase activity"/>
    <property type="evidence" value="ECO:0007669"/>
    <property type="project" value="UniProtKB-UniRule"/>
</dbReference>
<dbReference type="GO" id="GO:0046983">
    <property type="term" value="F:protein dimerization activity"/>
    <property type="evidence" value="ECO:0007669"/>
    <property type="project" value="InterPro"/>
</dbReference>
<dbReference type="GO" id="GO:0006351">
    <property type="term" value="P:DNA-templated transcription"/>
    <property type="evidence" value="ECO:0007669"/>
    <property type="project" value="UniProtKB-UniRule"/>
</dbReference>
<dbReference type="CDD" id="cd06928">
    <property type="entry name" value="RNAP_alpha_NTD"/>
    <property type="match status" value="1"/>
</dbReference>
<dbReference type="FunFam" id="1.10.150.20:FF:000001">
    <property type="entry name" value="DNA-directed RNA polymerase subunit alpha"/>
    <property type="match status" value="1"/>
</dbReference>
<dbReference type="FunFam" id="2.170.120.12:FF:000001">
    <property type="entry name" value="DNA-directed RNA polymerase subunit alpha"/>
    <property type="match status" value="1"/>
</dbReference>
<dbReference type="Gene3D" id="1.10.150.20">
    <property type="entry name" value="5' to 3' exonuclease, C-terminal subdomain"/>
    <property type="match status" value="1"/>
</dbReference>
<dbReference type="Gene3D" id="2.170.120.12">
    <property type="entry name" value="DNA-directed RNA polymerase, insert domain"/>
    <property type="match status" value="1"/>
</dbReference>
<dbReference type="Gene3D" id="3.30.1360.10">
    <property type="entry name" value="RNA polymerase, RBP11-like subunit"/>
    <property type="match status" value="1"/>
</dbReference>
<dbReference type="HAMAP" id="MF_00059">
    <property type="entry name" value="RNApol_bact_RpoA"/>
    <property type="match status" value="1"/>
</dbReference>
<dbReference type="InterPro" id="IPR011262">
    <property type="entry name" value="DNA-dir_RNA_pol_insert"/>
</dbReference>
<dbReference type="InterPro" id="IPR011263">
    <property type="entry name" value="DNA-dir_RNA_pol_RpoA/D/Rpb3"/>
</dbReference>
<dbReference type="InterPro" id="IPR011773">
    <property type="entry name" value="DNA-dir_RpoA"/>
</dbReference>
<dbReference type="InterPro" id="IPR036603">
    <property type="entry name" value="RBP11-like"/>
</dbReference>
<dbReference type="InterPro" id="IPR011260">
    <property type="entry name" value="RNAP_asu_C"/>
</dbReference>
<dbReference type="InterPro" id="IPR036643">
    <property type="entry name" value="RNApol_insert_sf"/>
</dbReference>
<dbReference type="NCBIfam" id="NF003513">
    <property type="entry name" value="PRK05182.1-2"/>
    <property type="match status" value="1"/>
</dbReference>
<dbReference type="NCBIfam" id="NF003519">
    <property type="entry name" value="PRK05182.2-5"/>
    <property type="match status" value="1"/>
</dbReference>
<dbReference type="NCBIfam" id="TIGR02027">
    <property type="entry name" value="rpoA"/>
    <property type="match status" value="1"/>
</dbReference>
<dbReference type="Pfam" id="PF01000">
    <property type="entry name" value="RNA_pol_A_bac"/>
    <property type="match status" value="1"/>
</dbReference>
<dbReference type="Pfam" id="PF03118">
    <property type="entry name" value="RNA_pol_A_CTD"/>
    <property type="match status" value="1"/>
</dbReference>
<dbReference type="Pfam" id="PF01193">
    <property type="entry name" value="RNA_pol_L"/>
    <property type="match status" value="1"/>
</dbReference>
<dbReference type="SMART" id="SM00662">
    <property type="entry name" value="RPOLD"/>
    <property type="match status" value="1"/>
</dbReference>
<dbReference type="SUPFAM" id="SSF47789">
    <property type="entry name" value="C-terminal domain of RNA polymerase alpha subunit"/>
    <property type="match status" value="1"/>
</dbReference>
<dbReference type="SUPFAM" id="SSF56553">
    <property type="entry name" value="Insert subdomain of RNA polymerase alpha subunit"/>
    <property type="match status" value="1"/>
</dbReference>
<dbReference type="SUPFAM" id="SSF55257">
    <property type="entry name" value="RBP11-like subunits of RNA polymerase"/>
    <property type="match status" value="1"/>
</dbReference>
<comment type="function">
    <text evidence="1">DNA-dependent RNA polymerase catalyzes the transcription of DNA into RNA using the four ribonucleoside triphosphates as substrates.</text>
</comment>
<comment type="catalytic activity">
    <reaction evidence="1">
        <text>RNA(n) + a ribonucleoside 5'-triphosphate = RNA(n+1) + diphosphate</text>
        <dbReference type="Rhea" id="RHEA:21248"/>
        <dbReference type="Rhea" id="RHEA-COMP:14527"/>
        <dbReference type="Rhea" id="RHEA-COMP:17342"/>
        <dbReference type="ChEBI" id="CHEBI:33019"/>
        <dbReference type="ChEBI" id="CHEBI:61557"/>
        <dbReference type="ChEBI" id="CHEBI:140395"/>
        <dbReference type="EC" id="2.7.7.6"/>
    </reaction>
</comment>
<comment type="subunit">
    <text evidence="1">Homodimer. The RNAP catalytic core consists of 2 alpha, 1 beta, 1 beta' and 1 omega subunit. When a sigma factor is associated with the core the holoenzyme is formed, which can initiate transcription.</text>
</comment>
<comment type="domain">
    <text evidence="1">The N-terminal domain is essential for RNAP assembly and basal transcription, whereas the C-terminal domain is involved in interaction with transcriptional regulators and with upstream promoter elements.</text>
</comment>
<comment type="similarity">
    <text evidence="1">Belongs to the RNA polymerase alpha chain family.</text>
</comment>
<keyword id="KW-0240">DNA-directed RNA polymerase</keyword>
<keyword id="KW-0548">Nucleotidyltransferase</keyword>
<keyword id="KW-0804">Transcription</keyword>
<keyword id="KW-0808">Transferase</keyword>
<evidence type="ECO:0000255" key="1">
    <source>
        <dbReference type="HAMAP-Rule" id="MF_00059"/>
    </source>
</evidence>
<reference key="1">
    <citation type="submission" date="2007-07" db="EMBL/GenBank/DDBJ databases">
        <title>Complete sequence of chromosome of Shewanella baltica OS185.</title>
        <authorList>
            <consortium name="US DOE Joint Genome Institute"/>
            <person name="Copeland A."/>
            <person name="Lucas S."/>
            <person name="Lapidus A."/>
            <person name="Barry K."/>
            <person name="Glavina del Rio T."/>
            <person name="Dalin E."/>
            <person name="Tice H."/>
            <person name="Pitluck S."/>
            <person name="Sims D."/>
            <person name="Brettin T."/>
            <person name="Bruce D."/>
            <person name="Detter J.C."/>
            <person name="Han C."/>
            <person name="Schmutz J."/>
            <person name="Larimer F."/>
            <person name="Land M."/>
            <person name="Hauser L."/>
            <person name="Kyrpides N."/>
            <person name="Mikhailova N."/>
            <person name="Brettar I."/>
            <person name="Rodrigues J."/>
            <person name="Konstantinidis K."/>
            <person name="Tiedje J."/>
            <person name="Richardson P."/>
        </authorList>
    </citation>
    <scope>NUCLEOTIDE SEQUENCE [LARGE SCALE GENOMIC DNA]</scope>
    <source>
        <strain>OS185</strain>
    </source>
</reference>
<name>RPOA_SHEB8</name>
<sequence>MQGSVTEFLKPRLVDIEQVNSTRAKVTLEPLERGFGHTLGNALRRILLSSMPGCAVTEVEIDGVLHEYSSKEGVQEDILEILLNLKGLAVTIEGKDEAMLTLSKSGAGPVIAADITHDGDVTIVNPDHIICHLTGNNDISMRIRVERGRGYVPASARAQTEDDDRPIGRLLVDASFSPVARIAYNVEAARVEQRTDLDKLVIDMTTNGTIDPEEAIRRSATILAEQLDAFVELRDVTEPELKEEKPEFDPILLRPVDDLELTVRSANCLKAEAIHYIGDLVQRTEVELLKTPNLGKKSLTEIKDVLASRGLSLGMRLENWPPASLADDL</sequence>
<protein>
    <recommendedName>
        <fullName evidence="1">DNA-directed RNA polymerase subunit alpha</fullName>
        <shortName evidence="1">RNAP subunit alpha</shortName>
        <ecNumber evidence="1">2.7.7.6</ecNumber>
    </recommendedName>
    <alternativeName>
        <fullName evidence="1">RNA polymerase subunit alpha</fullName>
    </alternativeName>
    <alternativeName>
        <fullName evidence="1">Transcriptase subunit alpha</fullName>
    </alternativeName>
</protein>
<organism>
    <name type="scientific">Shewanella baltica (strain OS185)</name>
    <dbReference type="NCBI Taxonomy" id="402882"/>
    <lineage>
        <taxon>Bacteria</taxon>
        <taxon>Pseudomonadati</taxon>
        <taxon>Pseudomonadota</taxon>
        <taxon>Gammaproteobacteria</taxon>
        <taxon>Alteromonadales</taxon>
        <taxon>Shewanellaceae</taxon>
        <taxon>Shewanella</taxon>
    </lineage>
</organism>